<gene>
    <name type="ordered locus">CLL_A1175</name>
</gene>
<organism>
    <name type="scientific">Clostridium botulinum (strain Eklund 17B / Type B)</name>
    <dbReference type="NCBI Taxonomy" id="935198"/>
    <lineage>
        <taxon>Bacteria</taxon>
        <taxon>Bacillati</taxon>
        <taxon>Bacillota</taxon>
        <taxon>Clostridia</taxon>
        <taxon>Eubacteriales</taxon>
        <taxon>Clostridiaceae</taxon>
        <taxon>Clostridium</taxon>
    </lineage>
</organism>
<dbReference type="EMBL" id="CP001056">
    <property type="protein sequence ID" value="ACD23172.1"/>
    <property type="molecule type" value="Genomic_DNA"/>
</dbReference>
<dbReference type="SMR" id="B2THN1"/>
<dbReference type="KEGG" id="cbk:CLL_A1175"/>
<dbReference type="PATRIC" id="fig|935198.13.peg.1120"/>
<dbReference type="HOGENOM" id="CLU_162466_0_0_9"/>
<dbReference type="Proteomes" id="UP000001195">
    <property type="component" value="Chromosome"/>
</dbReference>
<dbReference type="HAMAP" id="MF_01507">
    <property type="entry name" value="UPF0297"/>
    <property type="match status" value="1"/>
</dbReference>
<dbReference type="InterPro" id="IPR009309">
    <property type="entry name" value="IreB"/>
</dbReference>
<dbReference type="NCBIfam" id="NF003997">
    <property type="entry name" value="PRK05473.1"/>
    <property type="match status" value="1"/>
</dbReference>
<dbReference type="PANTHER" id="PTHR40067">
    <property type="entry name" value="UPF0297 PROTEIN YRZL"/>
    <property type="match status" value="1"/>
</dbReference>
<dbReference type="PANTHER" id="PTHR40067:SF1">
    <property type="entry name" value="UPF0297 PROTEIN YRZL"/>
    <property type="match status" value="1"/>
</dbReference>
<dbReference type="Pfam" id="PF06135">
    <property type="entry name" value="IreB"/>
    <property type="match status" value="1"/>
</dbReference>
<dbReference type="PIRSF" id="PIRSF037258">
    <property type="entry name" value="DUF965_bac"/>
    <property type="match status" value="1"/>
</dbReference>
<sequence length="85" mass="9823">MSKNIEHTMQFDLNKTKEALTKAILTEVYDSLQQKGYNPINQLVGYLISGDPTYITNYNGARALVRKLERDEILEEVIKSYLEIK</sequence>
<comment type="similarity">
    <text evidence="1">Belongs to the UPF0297 family.</text>
</comment>
<reference key="1">
    <citation type="submission" date="2008-04" db="EMBL/GenBank/DDBJ databases">
        <title>Complete sequence of Clostridium botulinum strain Eklund.</title>
        <authorList>
            <person name="Brinkac L.M."/>
            <person name="Brown J.L."/>
            <person name="Bruce D."/>
            <person name="Detter C."/>
            <person name="Munk C."/>
            <person name="Smith L.A."/>
            <person name="Smith T.J."/>
            <person name="Sutton G."/>
            <person name="Brettin T.S."/>
        </authorList>
    </citation>
    <scope>NUCLEOTIDE SEQUENCE [LARGE SCALE GENOMIC DNA]</scope>
    <source>
        <strain>Eklund 17B / Type B</strain>
    </source>
</reference>
<proteinExistence type="inferred from homology"/>
<feature type="chain" id="PRO_1000198232" description="UPF0297 protein CLL_A1175">
    <location>
        <begin position="1"/>
        <end position="85"/>
    </location>
</feature>
<accession>B2THN1</accession>
<name>Y1175_CLOBB</name>
<evidence type="ECO:0000255" key="1">
    <source>
        <dbReference type="HAMAP-Rule" id="MF_01507"/>
    </source>
</evidence>
<protein>
    <recommendedName>
        <fullName evidence="1">UPF0297 protein CLL_A1175</fullName>
    </recommendedName>
</protein>